<comment type="function">
    <text evidence="1">Functions in xyloglucan synthesis by adding side chains to the xylosylated glucan backbone. Involved in the galactosylation of hemicellulose xyloglucan.</text>
</comment>
<comment type="subcellular location">
    <subcellularLocation>
        <location evidence="2">Golgi apparatus membrane</location>
        <topology evidence="2">Single-pass type II membrane protein</topology>
    </subcellularLocation>
</comment>
<comment type="tissue specificity">
    <text evidence="5">Expressed in roots, hypocotyls, cotyledons, leaves, stems, petals and carpels.</text>
</comment>
<comment type="similarity">
    <text evidence="7">Belongs to the glycosyltransferase 47 family.</text>
</comment>
<sequence>MDKFNPKKEKTVKKRALKVLTEISPTPLFSMLFLLHISQIATYLSLSDKETLNITVKTKQGGTDTCAGRYVYMHNLPSRFNEDLIKSCEAYIELRNKCKYLINSGFGPRILEEDHNHTTRVLTIETGSWYYTNQFMLEVIFREKMRHYECLTNDSSLSSVVFVPFYAGFDVRRFWGYNVKLRDELGEDLAQWLRERPEWRKMYGRDHFFVTGRVGRDFRRVTDQDSDWGNKLMRLPEFENITMLSIETNSRSNEFAVPYPTYFHPKSRTEVKRWQRQVTMMQRRYLFSFVGANRPKMEESIRGEIIRQCLASQGRCKFLDCDTSSKDCSDPVKVVEVFQDSVFCLQPPGDTPTRRSTFDSILAGCIPVFFSVDSVYNQYKWYFPKDRTKYSVYIAEEGVKKGKVSIEKLLANVSEEKISRMRNEVEKIIPKIIYTKPGEVGPEKIEDAFEIAVARVLERVSLFKMTRI</sequence>
<accession>O48843</accession>
<name>GT13_ARATH</name>
<evidence type="ECO:0000250" key="1">
    <source>
        <dbReference type="UniProtKB" id="F4K6F1"/>
    </source>
</evidence>
<evidence type="ECO:0000250" key="2">
    <source>
        <dbReference type="UniProtKB" id="Q7XJ98"/>
    </source>
</evidence>
<evidence type="ECO:0000255" key="3"/>
<evidence type="ECO:0000255" key="4">
    <source>
        <dbReference type="PROSITE-ProRule" id="PRU00498"/>
    </source>
</evidence>
<evidence type="ECO:0000269" key="5">
    <source>
    </source>
</evidence>
<evidence type="ECO:0000303" key="6">
    <source>
    </source>
</evidence>
<evidence type="ECO:0000305" key="7"/>
<evidence type="ECO:0000312" key="8">
    <source>
        <dbReference type="Araport" id="AT2G32740"/>
    </source>
</evidence>
<protein>
    <recommendedName>
        <fullName evidence="7">Probable xyloglucan galactosyltransferase GT13</fullName>
        <ecNumber evidence="7">2.4.1.-</ecNumber>
    </recommendedName>
    <alternativeName>
        <fullName evidence="6">Glycosyltransferase 13</fullName>
        <shortName evidence="6">AtGT13</shortName>
    </alternativeName>
</protein>
<dbReference type="EC" id="2.4.1.-" evidence="7"/>
<dbReference type="EMBL" id="KJ138878">
    <property type="protein sequence ID" value="AHL38818.1"/>
    <property type="molecule type" value="mRNA"/>
</dbReference>
<dbReference type="EMBL" id="AC003974">
    <property type="protein sequence ID" value="AAC04489.1"/>
    <property type="molecule type" value="Genomic_DNA"/>
</dbReference>
<dbReference type="EMBL" id="CP002685">
    <property type="protein sequence ID" value="AEC08731.1"/>
    <property type="molecule type" value="Genomic_DNA"/>
</dbReference>
<dbReference type="PIR" id="T00794">
    <property type="entry name" value="T00794"/>
</dbReference>
<dbReference type="RefSeq" id="NP_180833.1">
    <property type="nucleotide sequence ID" value="NM_128833.2"/>
</dbReference>
<dbReference type="STRING" id="3702.O48843"/>
<dbReference type="CAZy" id="GT47">
    <property type="family name" value="Glycosyltransferase Family 47"/>
</dbReference>
<dbReference type="GlyCosmos" id="O48843">
    <property type="glycosylation" value="5 sites, No reported glycans"/>
</dbReference>
<dbReference type="GlyGen" id="O48843">
    <property type="glycosylation" value="6 sites"/>
</dbReference>
<dbReference type="PaxDb" id="3702-AT2G32740.1"/>
<dbReference type="EnsemblPlants" id="AT2G32740.1">
    <property type="protein sequence ID" value="AT2G32740.1"/>
    <property type="gene ID" value="AT2G32740"/>
</dbReference>
<dbReference type="GeneID" id="817834"/>
<dbReference type="Gramene" id="AT2G32740.1">
    <property type="protein sequence ID" value="AT2G32740.1"/>
    <property type="gene ID" value="AT2G32740"/>
</dbReference>
<dbReference type="KEGG" id="ath:AT2G32740"/>
<dbReference type="Araport" id="AT2G32740"/>
<dbReference type="TAIR" id="AT2G32740">
    <property type="gene designation" value="GT13"/>
</dbReference>
<dbReference type="eggNOG" id="KOG1021">
    <property type="taxonomic scope" value="Eukaryota"/>
</dbReference>
<dbReference type="HOGENOM" id="CLU_012659_4_1_1"/>
<dbReference type="InParanoid" id="O48843"/>
<dbReference type="OMA" id="PACCVVW"/>
<dbReference type="PhylomeDB" id="O48843"/>
<dbReference type="PRO" id="PR:O48843"/>
<dbReference type="Proteomes" id="UP000006548">
    <property type="component" value="Chromosome 2"/>
</dbReference>
<dbReference type="ExpressionAtlas" id="O48843">
    <property type="expression patterns" value="baseline and differential"/>
</dbReference>
<dbReference type="GO" id="GO:0000139">
    <property type="term" value="C:Golgi membrane"/>
    <property type="evidence" value="ECO:0007669"/>
    <property type="project" value="UniProtKB-SubCell"/>
</dbReference>
<dbReference type="GO" id="GO:0016757">
    <property type="term" value="F:glycosyltransferase activity"/>
    <property type="evidence" value="ECO:0007669"/>
    <property type="project" value="UniProtKB-KW"/>
</dbReference>
<dbReference type="GO" id="GO:0006486">
    <property type="term" value="P:protein glycosylation"/>
    <property type="evidence" value="ECO:0007669"/>
    <property type="project" value="InterPro"/>
</dbReference>
<dbReference type="InterPro" id="IPR004263">
    <property type="entry name" value="Exostosin"/>
</dbReference>
<dbReference type="InterPro" id="IPR040911">
    <property type="entry name" value="Exostosin_GT47"/>
</dbReference>
<dbReference type="PANTHER" id="PTHR11062">
    <property type="entry name" value="EXOSTOSIN HEPARAN SULFATE GLYCOSYLTRANSFERASE -RELATED"/>
    <property type="match status" value="1"/>
</dbReference>
<dbReference type="PANTHER" id="PTHR11062:SF262">
    <property type="entry name" value="XYLOGLUCAN GALACTOSYLTRANSFERASE GT13-RELATED"/>
    <property type="match status" value="1"/>
</dbReference>
<dbReference type="Pfam" id="PF03016">
    <property type="entry name" value="Exostosin_GT47"/>
    <property type="match status" value="1"/>
</dbReference>
<organism>
    <name type="scientific">Arabidopsis thaliana</name>
    <name type="common">Mouse-ear cress</name>
    <dbReference type="NCBI Taxonomy" id="3702"/>
    <lineage>
        <taxon>Eukaryota</taxon>
        <taxon>Viridiplantae</taxon>
        <taxon>Streptophyta</taxon>
        <taxon>Embryophyta</taxon>
        <taxon>Tracheophyta</taxon>
        <taxon>Spermatophyta</taxon>
        <taxon>Magnoliopsida</taxon>
        <taxon>eudicotyledons</taxon>
        <taxon>Gunneridae</taxon>
        <taxon>Pentapetalae</taxon>
        <taxon>rosids</taxon>
        <taxon>malvids</taxon>
        <taxon>Brassicales</taxon>
        <taxon>Brassicaceae</taxon>
        <taxon>Camelineae</taxon>
        <taxon>Arabidopsis</taxon>
    </lineage>
</organism>
<proteinExistence type="evidence at transcript level"/>
<gene>
    <name evidence="6" type="primary">GT13</name>
    <name evidence="8" type="ordered locus">At2g32740</name>
</gene>
<feature type="chain" id="PRO_0000435995" description="Probable xyloglucan galactosyltransferase GT13">
    <location>
        <begin position="1"/>
        <end position="468"/>
    </location>
</feature>
<feature type="topological domain" description="Cytoplasmic" evidence="7">
    <location>
        <begin position="1"/>
        <end position="18"/>
    </location>
</feature>
<feature type="transmembrane region" description="Helical; Signal-anchor for type II membrane protein" evidence="3">
    <location>
        <begin position="19"/>
        <end position="35"/>
    </location>
</feature>
<feature type="topological domain" description="Lumenal" evidence="7">
    <location>
        <begin position="36"/>
        <end position="468"/>
    </location>
</feature>
<feature type="glycosylation site" description="N-linked (GlcNAc...) asparagine" evidence="4">
    <location>
        <position position="53"/>
    </location>
</feature>
<feature type="glycosylation site" description="N-linked (GlcNAc...) asparagine" evidence="4">
    <location>
        <position position="116"/>
    </location>
</feature>
<feature type="glycosylation site" description="N-linked (GlcNAc...) asparagine" evidence="4">
    <location>
        <position position="153"/>
    </location>
</feature>
<feature type="glycosylation site" description="N-linked (GlcNAc...) asparagine" evidence="4">
    <location>
        <position position="240"/>
    </location>
</feature>
<feature type="glycosylation site" description="N-linked (GlcNAc...) asparagine" evidence="4">
    <location>
        <position position="412"/>
    </location>
</feature>
<reference key="1">
    <citation type="journal article" date="2014" name="Plant J.">
        <title>The plant glycosyltransferase clone collection for functional genomics.</title>
        <authorList>
            <person name="Lao J."/>
            <person name="Oikawa A."/>
            <person name="Bromley J.R."/>
            <person name="McInerney P."/>
            <person name="Suttangkakul A."/>
            <person name="Smith-Moritz A.M."/>
            <person name="Plahar H."/>
            <person name="Chiu T.-Y."/>
            <person name="Gonzalez Fernandez-Nino S.M.G."/>
            <person name="Ebert B."/>
            <person name="Yang F."/>
            <person name="Christiansen K.M."/>
            <person name="Hansen S.F."/>
            <person name="Stonebloom S."/>
            <person name="Adams P.D."/>
            <person name="Ronald P.C."/>
            <person name="Hillson N.J."/>
            <person name="Hadi M.Z."/>
            <person name="Vega-Sanchez M.E."/>
            <person name="Loque D."/>
            <person name="Scheller H.V."/>
            <person name="Heazlewood J.L."/>
        </authorList>
    </citation>
    <scope>NUCLEOTIDE SEQUENCE [MRNA]</scope>
    <source>
        <strain>cv. Columbia</strain>
    </source>
</reference>
<reference key="2">
    <citation type="journal article" date="1999" name="Nature">
        <title>Sequence and analysis of chromosome 2 of the plant Arabidopsis thaliana.</title>
        <authorList>
            <person name="Lin X."/>
            <person name="Kaul S."/>
            <person name="Rounsley S.D."/>
            <person name="Shea T.P."/>
            <person name="Benito M.-I."/>
            <person name="Town C.D."/>
            <person name="Fujii C.Y."/>
            <person name="Mason T.M."/>
            <person name="Bowman C.L."/>
            <person name="Barnstead M.E."/>
            <person name="Feldblyum T.V."/>
            <person name="Buell C.R."/>
            <person name="Ketchum K.A."/>
            <person name="Lee J.J."/>
            <person name="Ronning C.M."/>
            <person name="Koo H.L."/>
            <person name="Moffat K.S."/>
            <person name="Cronin L.A."/>
            <person name="Shen M."/>
            <person name="Pai G."/>
            <person name="Van Aken S."/>
            <person name="Umayam L."/>
            <person name="Tallon L.J."/>
            <person name="Gill J.E."/>
            <person name="Adams M.D."/>
            <person name="Carrera A.J."/>
            <person name="Creasy T.H."/>
            <person name="Goodman H.M."/>
            <person name="Somerville C.R."/>
            <person name="Copenhaver G.P."/>
            <person name="Preuss D."/>
            <person name="Nierman W.C."/>
            <person name="White O."/>
            <person name="Eisen J.A."/>
            <person name="Salzberg S.L."/>
            <person name="Fraser C.M."/>
            <person name="Venter J.C."/>
        </authorList>
    </citation>
    <scope>NUCLEOTIDE SEQUENCE [LARGE SCALE GENOMIC DNA]</scope>
    <source>
        <strain>cv. Columbia</strain>
    </source>
</reference>
<reference key="3">
    <citation type="journal article" date="2017" name="Plant J.">
        <title>Araport11: a complete reannotation of the Arabidopsis thaliana reference genome.</title>
        <authorList>
            <person name="Cheng C.Y."/>
            <person name="Krishnakumar V."/>
            <person name="Chan A.P."/>
            <person name="Thibaud-Nissen F."/>
            <person name="Schobel S."/>
            <person name="Town C.D."/>
        </authorList>
    </citation>
    <scope>GENOME REANNOTATION</scope>
    <source>
        <strain>cv. Columbia</strain>
    </source>
</reference>
<reference key="4">
    <citation type="journal article" date="2004" name="Plant Physiol.">
        <title>Molecular analysis of 10 coding regions from Arabidopsis that are homologous to the MUR3 xyloglucan galactosyltransferase.</title>
        <authorList>
            <person name="Li X."/>
            <person name="Cordero I."/>
            <person name="Caplan J."/>
            <person name="Moelhoej M."/>
            <person name="Reiter W.D."/>
        </authorList>
    </citation>
    <scope>TISSUE SPECIFICITY</scope>
</reference>
<keyword id="KW-0325">Glycoprotein</keyword>
<keyword id="KW-0328">Glycosyltransferase</keyword>
<keyword id="KW-0333">Golgi apparatus</keyword>
<keyword id="KW-0472">Membrane</keyword>
<keyword id="KW-1185">Reference proteome</keyword>
<keyword id="KW-0735">Signal-anchor</keyword>
<keyword id="KW-0808">Transferase</keyword>
<keyword id="KW-0812">Transmembrane</keyword>
<keyword id="KW-1133">Transmembrane helix</keyword>